<gene>
    <name evidence="1" type="primary">argH</name>
    <name type="ordered locus">Cpha266_1327</name>
</gene>
<proteinExistence type="inferred from homology"/>
<dbReference type="EC" id="4.3.2.1" evidence="1"/>
<dbReference type="EMBL" id="CP000492">
    <property type="protein sequence ID" value="ABL65358.1"/>
    <property type="status" value="ALT_INIT"/>
    <property type="molecule type" value="Genomic_DNA"/>
</dbReference>
<dbReference type="RefSeq" id="WP_041467236.1">
    <property type="nucleotide sequence ID" value="NC_008639.1"/>
</dbReference>
<dbReference type="SMR" id="A1BG31"/>
<dbReference type="STRING" id="290317.Cpha266_1327"/>
<dbReference type="KEGG" id="cph:Cpha266_1327"/>
<dbReference type="eggNOG" id="COG0165">
    <property type="taxonomic scope" value="Bacteria"/>
</dbReference>
<dbReference type="HOGENOM" id="CLU_027272_2_3_10"/>
<dbReference type="OrthoDB" id="9769623at2"/>
<dbReference type="UniPathway" id="UPA00068">
    <property type="reaction ID" value="UER00114"/>
</dbReference>
<dbReference type="Proteomes" id="UP000008701">
    <property type="component" value="Chromosome"/>
</dbReference>
<dbReference type="GO" id="GO:0005829">
    <property type="term" value="C:cytosol"/>
    <property type="evidence" value="ECO:0007669"/>
    <property type="project" value="TreeGrafter"/>
</dbReference>
<dbReference type="GO" id="GO:0004056">
    <property type="term" value="F:argininosuccinate lyase activity"/>
    <property type="evidence" value="ECO:0007669"/>
    <property type="project" value="UniProtKB-UniRule"/>
</dbReference>
<dbReference type="GO" id="GO:0042450">
    <property type="term" value="P:arginine biosynthetic process via ornithine"/>
    <property type="evidence" value="ECO:0007669"/>
    <property type="project" value="InterPro"/>
</dbReference>
<dbReference type="GO" id="GO:0006526">
    <property type="term" value="P:L-arginine biosynthetic process"/>
    <property type="evidence" value="ECO:0007669"/>
    <property type="project" value="UniProtKB-UniRule"/>
</dbReference>
<dbReference type="CDD" id="cd01359">
    <property type="entry name" value="Argininosuccinate_lyase"/>
    <property type="match status" value="1"/>
</dbReference>
<dbReference type="FunFam" id="1.10.275.10:FF:000002">
    <property type="entry name" value="Argininosuccinate lyase"/>
    <property type="match status" value="1"/>
</dbReference>
<dbReference type="FunFam" id="1.10.40.30:FF:000001">
    <property type="entry name" value="Argininosuccinate lyase"/>
    <property type="match status" value="1"/>
</dbReference>
<dbReference type="FunFam" id="1.20.200.10:FF:000015">
    <property type="entry name" value="argininosuccinate lyase isoform X2"/>
    <property type="match status" value="1"/>
</dbReference>
<dbReference type="Gene3D" id="1.10.40.30">
    <property type="entry name" value="Fumarase/aspartase (C-terminal domain)"/>
    <property type="match status" value="1"/>
</dbReference>
<dbReference type="Gene3D" id="1.20.200.10">
    <property type="entry name" value="Fumarase/aspartase (Central domain)"/>
    <property type="match status" value="1"/>
</dbReference>
<dbReference type="Gene3D" id="1.10.275.10">
    <property type="entry name" value="Fumarase/aspartase (N-terminal domain)"/>
    <property type="match status" value="1"/>
</dbReference>
<dbReference type="HAMAP" id="MF_00006">
    <property type="entry name" value="Arg_succ_lyase"/>
    <property type="match status" value="1"/>
</dbReference>
<dbReference type="InterPro" id="IPR029419">
    <property type="entry name" value="Arg_succ_lyase_C"/>
</dbReference>
<dbReference type="InterPro" id="IPR009049">
    <property type="entry name" value="Argininosuccinate_lyase"/>
</dbReference>
<dbReference type="InterPro" id="IPR024083">
    <property type="entry name" value="Fumarase/histidase_N"/>
</dbReference>
<dbReference type="InterPro" id="IPR020557">
    <property type="entry name" value="Fumarate_lyase_CS"/>
</dbReference>
<dbReference type="InterPro" id="IPR000362">
    <property type="entry name" value="Fumarate_lyase_fam"/>
</dbReference>
<dbReference type="InterPro" id="IPR022761">
    <property type="entry name" value="Fumarate_lyase_N"/>
</dbReference>
<dbReference type="InterPro" id="IPR008948">
    <property type="entry name" value="L-Aspartase-like"/>
</dbReference>
<dbReference type="NCBIfam" id="TIGR00838">
    <property type="entry name" value="argH"/>
    <property type="match status" value="1"/>
</dbReference>
<dbReference type="PANTHER" id="PTHR43814">
    <property type="entry name" value="ARGININOSUCCINATE LYASE"/>
    <property type="match status" value="1"/>
</dbReference>
<dbReference type="PANTHER" id="PTHR43814:SF1">
    <property type="entry name" value="ARGININOSUCCINATE LYASE"/>
    <property type="match status" value="1"/>
</dbReference>
<dbReference type="Pfam" id="PF14698">
    <property type="entry name" value="ASL_C2"/>
    <property type="match status" value="1"/>
</dbReference>
<dbReference type="Pfam" id="PF00206">
    <property type="entry name" value="Lyase_1"/>
    <property type="match status" value="1"/>
</dbReference>
<dbReference type="PRINTS" id="PR00145">
    <property type="entry name" value="ARGSUCLYASE"/>
</dbReference>
<dbReference type="PRINTS" id="PR00149">
    <property type="entry name" value="FUMRATELYASE"/>
</dbReference>
<dbReference type="SUPFAM" id="SSF48557">
    <property type="entry name" value="L-aspartase-like"/>
    <property type="match status" value="1"/>
</dbReference>
<dbReference type="PROSITE" id="PS00163">
    <property type="entry name" value="FUMARATE_LYASES"/>
    <property type="match status" value="1"/>
</dbReference>
<comment type="catalytic activity">
    <reaction evidence="1">
        <text>2-(N(omega)-L-arginino)succinate = fumarate + L-arginine</text>
        <dbReference type="Rhea" id="RHEA:24020"/>
        <dbReference type="ChEBI" id="CHEBI:29806"/>
        <dbReference type="ChEBI" id="CHEBI:32682"/>
        <dbReference type="ChEBI" id="CHEBI:57472"/>
        <dbReference type="EC" id="4.3.2.1"/>
    </reaction>
</comment>
<comment type="pathway">
    <text evidence="1">Amino-acid biosynthesis; L-arginine biosynthesis; L-arginine from L-ornithine and carbamoyl phosphate: step 3/3.</text>
</comment>
<comment type="subcellular location">
    <subcellularLocation>
        <location evidence="1">Cytoplasm</location>
    </subcellularLocation>
</comment>
<comment type="similarity">
    <text evidence="1">Belongs to the lyase 1 family. Argininosuccinate lyase subfamily.</text>
</comment>
<comment type="sequence caution" evidence="2">
    <conflict type="erroneous initiation">
        <sequence resource="EMBL-CDS" id="ABL65358"/>
    </conflict>
</comment>
<keyword id="KW-0028">Amino-acid biosynthesis</keyword>
<keyword id="KW-0055">Arginine biosynthesis</keyword>
<keyword id="KW-0963">Cytoplasm</keyword>
<keyword id="KW-0456">Lyase</keyword>
<keyword id="KW-1185">Reference proteome</keyword>
<accession>A1BG31</accession>
<evidence type="ECO:0000255" key="1">
    <source>
        <dbReference type="HAMAP-Rule" id="MF_00006"/>
    </source>
</evidence>
<evidence type="ECO:0000305" key="2"/>
<feature type="chain" id="PRO_0000321435" description="Argininosuccinate lyase">
    <location>
        <begin position="1"/>
        <end position="464"/>
    </location>
</feature>
<reference key="1">
    <citation type="submission" date="2006-12" db="EMBL/GenBank/DDBJ databases">
        <title>Complete sequence of Chlorobium phaeobacteroides DSM 266.</title>
        <authorList>
            <consortium name="US DOE Joint Genome Institute"/>
            <person name="Copeland A."/>
            <person name="Lucas S."/>
            <person name="Lapidus A."/>
            <person name="Barry K."/>
            <person name="Detter J.C."/>
            <person name="Glavina del Rio T."/>
            <person name="Hammon N."/>
            <person name="Israni S."/>
            <person name="Pitluck S."/>
            <person name="Goltsman E."/>
            <person name="Schmutz J."/>
            <person name="Larimer F."/>
            <person name="Land M."/>
            <person name="Hauser L."/>
            <person name="Mikhailova N."/>
            <person name="Li T."/>
            <person name="Overmann J."/>
            <person name="Bryant D.A."/>
            <person name="Richardson P."/>
        </authorList>
    </citation>
    <scope>NUCLEOTIDE SEQUENCE [LARGE SCALE GENOMIC DNA]</scope>
    <source>
        <strain>DSM 266 / SMG 266 / 2430</strain>
    </source>
</reference>
<organism>
    <name type="scientific">Chlorobium phaeobacteroides (strain DSM 266 / SMG 266 / 2430)</name>
    <dbReference type="NCBI Taxonomy" id="290317"/>
    <lineage>
        <taxon>Bacteria</taxon>
        <taxon>Pseudomonadati</taxon>
        <taxon>Chlorobiota</taxon>
        <taxon>Chlorobiia</taxon>
        <taxon>Chlorobiales</taxon>
        <taxon>Chlorobiaceae</taxon>
        <taxon>Chlorobium/Pelodictyon group</taxon>
        <taxon>Chlorobium</taxon>
    </lineage>
</organism>
<sequence>MSDKKELLWQSRFSEPFDRDALRFSSSVHIDKALFREDIEGSIAHVTMLAEQDIISDAECADLVQGLREIEEELASGTLVPHWEDEDIHTVIENRLKEKIGQTAGKIHSGRSRNDQVATDTRLYLRKKIAELQDAVQAMQQMLIGKAETYKETIIFGYTHLQRAQPISAGHYYLAWFSMFRRDRERLRDLLRRVNISPLGAAAFAGSTLPLNPARTAELLAFDDIFSNSIDAVSDRDILIEFISACSIMMMHLSRFAEDLILWSSYEFGYLEISDAFATGSSLMPQKKNADIAELVRGKTGRVYGNLVSMLTIMKGLPLSYNRDMQEDKQPLFDTAETTISSMRIFTKLIGHTTLKVERLRSLTSEDLSLATEIAEYLVSRNLPFREAHRITGKIVTFSIGEGITLPRITLEQFRTFSPLFDSAIYDSLKPEASVNSKKSHGSCSFRSVEAQLAEARAQMQENR</sequence>
<name>ARLY_CHLPD</name>
<protein>
    <recommendedName>
        <fullName evidence="1">Argininosuccinate lyase</fullName>
        <shortName evidence="1">ASAL</shortName>
        <ecNumber evidence="1">4.3.2.1</ecNumber>
    </recommendedName>
    <alternativeName>
        <fullName evidence="1">Arginosuccinase</fullName>
    </alternativeName>
</protein>